<dbReference type="EC" id="2.7.1.137" evidence="18 19"/>
<dbReference type="EMBL" id="X53531">
    <property type="protein sequence ID" value="CAA37610.1"/>
    <property type="molecule type" value="Genomic_DNA"/>
</dbReference>
<dbReference type="EMBL" id="U20865">
    <property type="protein sequence ID" value="AAB67396.1"/>
    <property type="molecule type" value="Genomic_DNA"/>
</dbReference>
<dbReference type="EMBL" id="U19027">
    <property type="protein sequence ID" value="AAB67422.2"/>
    <property type="molecule type" value="Genomic_DNA"/>
</dbReference>
<dbReference type="EMBL" id="BK006945">
    <property type="protein sequence ID" value="DAA09554.1"/>
    <property type="molecule type" value="Genomic_DNA"/>
</dbReference>
<dbReference type="PIR" id="A36369">
    <property type="entry name" value="A36369"/>
</dbReference>
<dbReference type="RefSeq" id="NP_013341.1">
    <property type="nucleotide sequence ID" value="NM_001182127.1"/>
</dbReference>
<dbReference type="PDB" id="5DFZ">
    <property type="method" value="X-ray"/>
    <property type="resolution" value="4.40 A"/>
    <property type="chains" value="C=1-875"/>
</dbReference>
<dbReference type="PDB" id="5KC2">
    <property type="method" value="EM"/>
    <property type="resolution" value="28.00 A"/>
    <property type="chains" value="C=1-875"/>
</dbReference>
<dbReference type="PDBsum" id="5DFZ"/>
<dbReference type="PDBsum" id="5KC2"/>
<dbReference type="EMDB" id="EMD-8235"/>
<dbReference type="SMR" id="P22543"/>
<dbReference type="BioGRID" id="31507">
    <property type="interactions" value="131"/>
</dbReference>
<dbReference type="ComplexPortal" id="CPX-1677">
    <property type="entry name" value="Phosphatidylinositol 3-kinase complex II"/>
</dbReference>
<dbReference type="ComplexPortal" id="CPX-1881">
    <property type="entry name" value="Phosphatidylinositol 3-kinase complex, class III, type I"/>
</dbReference>
<dbReference type="DIP" id="DIP-97N"/>
<dbReference type="FunCoup" id="P22543">
    <property type="interactions" value="948"/>
</dbReference>
<dbReference type="IntAct" id="P22543">
    <property type="interactions" value="8"/>
</dbReference>
<dbReference type="MINT" id="P22543"/>
<dbReference type="STRING" id="4932.YLR240W"/>
<dbReference type="GlyGen" id="P22543">
    <property type="glycosylation" value="1 site, 1 O-linked glycan (1 site)"/>
</dbReference>
<dbReference type="iPTMnet" id="P22543"/>
<dbReference type="PaxDb" id="4932-YLR240W"/>
<dbReference type="PeptideAtlas" id="P22543"/>
<dbReference type="ABCD" id="P22543">
    <property type="antibodies" value="1 sequenced antibody"/>
</dbReference>
<dbReference type="EnsemblFungi" id="YLR240W_mRNA">
    <property type="protein sequence ID" value="YLR240W"/>
    <property type="gene ID" value="YLR240W"/>
</dbReference>
<dbReference type="GeneID" id="850941"/>
<dbReference type="KEGG" id="sce:YLR240W"/>
<dbReference type="AGR" id="SGD:S000004230"/>
<dbReference type="SGD" id="S000004230">
    <property type="gene designation" value="VPS34"/>
</dbReference>
<dbReference type="VEuPathDB" id="FungiDB:YLR240W"/>
<dbReference type="eggNOG" id="KOG0906">
    <property type="taxonomic scope" value="Eukaryota"/>
</dbReference>
<dbReference type="GeneTree" id="ENSGT00940000156943"/>
<dbReference type="HOGENOM" id="CLU_004869_0_0_1"/>
<dbReference type="InParanoid" id="P22543"/>
<dbReference type="OMA" id="LHKFAQY"/>
<dbReference type="OrthoDB" id="67688at2759"/>
<dbReference type="BioCyc" id="YEAST:YLR240W-MONOMER"/>
<dbReference type="BRENDA" id="2.7.1.137">
    <property type="organism ID" value="984"/>
</dbReference>
<dbReference type="Reactome" id="R-SCE-1632852">
    <property type="pathway name" value="Macroautophagy"/>
</dbReference>
<dbReference type="Reactome" id="R-SCE-1660514">
    <property type="pathway name" value="Synthesis of PIPs at the Golgi membrane"/>
</dbReference>
<dbReference type="Reactome" id="R-SCE-1660516">
    <property type="pathway name" value="Synthesis of PIPs at the early endosome membrane"/>
</dbReference>
<dbReference type="Reactome" id="R-SCE-1660517">
    <property type="pathway name" value="Synthesis of PIPs at the late endosome membrane"/>
</dbReference>
<dbReference type="Reactome" id="R-SCE-5668599">
    <property type="pathway name" value="RHO GTPases Activate NADPH Oxidases"/>
</dbReference>
<dbReference type="BioGRID-ORCS" id="850941">
    <property type="hits" value="5 hits in 10 CRISPR screens"/>
</dbReference>
<dbReference type="EvolutionaryTrace" id="P22543"/>
<dbReference type="PRO" id="PR:P22543"/>
<dbReference type="Proteomes" id="UP000002311">
    <property type="component" value="Chromosome XII"/>
</dbReference>
<dbReference type="RNAct" id="P22543">
    <property type="molecule type" value="protein"/>
</dbReference>
<dbReference type="GO" id="GO:0005737">
    <property type="term" value="C:cytoplasm"/>
    <property type="evidence" value="ECO:0000318"/>
    <property type="project" value="GO_Central"/>
</dbReference>
<dbReference type="GO" id="GO:0005829">
    <property type="term" value="C:cytosol"/>
    <property type="evidence" value="ECO:0007005"/>
    <property type="project" value="SGD"/>
</dbReference>
<dbReference type="GO" id="GO:0005768">
    <property type="term" value="C:endosome"/>
    <property type="evidence" value="ECO:0000314"/>
    <property type="project" value="SGD"/>
</dbReference>
<dbReference type="GO" id="GO:0010008">
    <property type="term" value="C:endosome membrane"/>
    <property type="evidence" value="ECO:0000303"/>
    <property type="project" value="ComplexPortal"/>
</dbReference>
<dbReference type="GO" id="GO:0000329">
    <property type="term" value="C:fungal-type vacuole membrane"/>
    <property type="evidence" value="ECO:0000314"/>
    <property type="project" value="SGD"/>
</dbReference>
<dbReference type="GO" id="GO:0000139">
    <property type="term" value="C:Golgi membrane"/>
    <property type="evidence" value="ECO:0000303"/>
    <property type="project" value="ComplexPortal"/>
</dbReference>
<dbReference type="GO" id="GO:0016020">
    <property type="term" value="C:membrane"/>
    <property type="evidence" value="ECO:0000318"/>
    <property type="project" value="GO_Central"/>
</dbReference>
<dbReference type="GO" id="GO:0071561">
    <property type="term" value="C:nucleus-vacuole junction"/>
    <property type="evidence" value="ECO:0000314"/>
    <property type="project" value="SGD"/>
</dbReference>
<dbReference type="GO" id="GO:0005777">
    <property type="term" value="C:peroxisome"/>
    <property type="evidence" value="ECO:0000314"/>
    <property type="project" value="SGD"/>
</dbReference>
<dbReference type="GO" id="GO:0000407">
    <property type="term" value="C:phagophore assembly site"/>
    <property type="evidence" value="ECO:0000314"/>
    <property type="project" value="SGD"/>
</dbReference>
<dbReference type="GO" id="GO:0034045">
    <property type="term" value="C:phagophore assembly site membrane"/>
    <property type="evidence" value="ECO:0000303"/>
    <property type="project" value="ComplexPortal"/>
</dbReference>
<dbReference type="GO" id="GO:0034271">
    <property type="term" value="C:phosphatidylinositol 3-kinase complex, class III, type I"/>
    <property type="evidence" value="ECO:0000314"/>
    <property type="project" value="SGD"/>
</dbReference>
<dbReference type="GO" id="GO:0034272">
    <property type="term" value="C:phosphatidylinositol 3-kinase complex, class III, type II"/>
    <property type="evidence" value="ECO:0000314"/>
    <property type="project" value="SGD"/>
</dbReference>
<dbReference type="GO" id="GO:0016303">
    <property type="term" value="F:1-phosphatidylinositol-3-kinase activity"/>
    <property type="evidence" value="ECO:0000314"/>
    <property type="project" value="SGD"/>
</dbReference>
<dbReference type="GO" id="GO:0005524">
    <property type="term" value="F:ATP binding"/>
    <property type="evidence" value="ECO:0007669"/>
    <property type="project" value="UniProtKB-KW"/>
</dbReference>
<dbReference type="GO" id="GO:0004672">
    <property type="term" value="F:protein kinase activity"/>
    <property type="evidence" value="ECO:0000314"/>
    <property type="project" value="SGD"/>
</dbReference>
<dbReference type="GO" id="GO:0000045">
    <property type="term" value="P:autophagosome assembly"/>
    <property type="evidence" value="ECO:0000318"/>
    <property type="project" value="GO_Central"/>
</dbReference>
<dbReference type="GO" id="GO:0006914">
    <property type="term" value="P:autophagy"/>
    <property type="evidence" value="ECO:0000314"/>
    <property type="project" value="ComplexPortal"/>
</dbReference>
<dbReference type="GO" id="GO:0051365">
    <property type="term" value="P:cellular response to potassium ion starvation"/>
    <property type="evidence" value="ECO:0000315"/>
    <property type="project" value="SGD"/>
</dbReference>
<dbReference type="GO" id="GO:0006897">
    <property type="term" value="P:endocytosis"/>
    <property type="evidence" value="ECO:0000318"/>
    <property type="project" value="GO_Central"/>
</dbReference>
<dbReference type="GO" id="GO:0045324">
    <property type="term" value="P:late endosome to vacuole transport"/>
    <property type="evidence" value="ECO:0000303"/>
    <property type="project" value="ComplexPortal"/>
</dbReference>
<dbReference type="GO" id="GO:0016236">
    <property type="term" value="P:macroautophagy"/>
    <property type="evidence" value="ECO:0000315"/>
    <property type="project" value="SGD"/>
</dbReference>
<dbReference type="GO" id="GO:0000425">
    <property type="term" value="P:pexophagy"/>
    <property type="evidence" value="ECO:0000315"/>
    <property type="project" value="SGD"/>
</dbReference>
<dbReference type="GO" id="GO:0046854">
    <property type="term" value="P:phosphatidylinositol phosphate biosynthetic process"/>
    <property type="evidence" value="ECO:0000314"/>
    <property type="project" value="ComplexPortal"/>
</dbReference>
<dbReference type="GO" id="GO:0036092">
    <property type="term" value="P:phosphatidylinositol-3-phosphate biosynthetic process"/>
    <property type="evidence" value="ECO:0000318"/>
    <property type="project" value="GO_Central"/>
</dbReference>
<dbReference type="GO" id="GO:0048015">
    <property type="term" value="P:phosphatidylinositol-mediated signaling"/>
    <property type="evidence" value="ECO:0000318"/>
    <property type="project" value="GO_Central"/>
</dbReference>
<dbReference type="GO" id="GO:0032968">
    <property type="term" value="P:positive regulation of transcription elongation by RNA polymerase II"/>
    <property type="evidence" value="ECO:0000315"/>
    <property type="project" value="SGD"/>
</dbReference>
<dbReference type="GO" id="GO:0015031">
    <property type="term" value="P:protein transport"/>
    <property type="evidence" value="ECO:0007669"/>
    <property type="project" value="UniProtKB-KW"/>
</dbReference>
<dbReference type="CDD" id="cd08397">
    <property type="entry name" value="C2_PI3K_class_III"/>
    <property type="match status" value="1"/>
</dbReference>
<dbReference type="CDD" id="cd00870">
    <property type="entry name" value="PI3Ka_III"/>
    <property type="match status" value="1"/>
</dbReference>
<dbReference type="CDD" id="cd00896">
    <property type="entry name" value="PI3Kc_III"/>
    <property type="match status" value="1"/>
</dbReference>
<dbReference type="FunFam" id="1.10.1070.11:FF:000002">
    <property type="entry name" value="Phosphatidylinositol 3-kinase catalytic subunit type 3"/>
    <property type="match status" value="1"/>
</dbReference>
<dbReference type="FunFam" id="3.30.1010.10:FF:000016">
    <property type="entry name" value="Phosphatidylinositol 3-kinase catalytic subunit type 3"/>
    <property type="match status" value="1"/>
</dbReference>
<dbReference type="FunFam" id="1.25.40.70:FF:000019">
    <property type="entry name" value="Phosphatidylinositol 3-kinase VPS34"/>
    <property type="match status" value="1"/>
</dbReference>
<dbReference type="Gene3D" id="2.60.40.150">
    <property type="entry name" value="C2 domain"/>
    <property type="match status" value="1"/>
</dbReference>
<dbReference type="Gene3D" id="1.10.1070.11">
    <property type="entry name" value="Phosphatidylinositol 3-/4-kinase, catalytic domain"/>
    <property type="match status" value="1"/>
</dbReference>
<dbReference type="Gene3D" id="3.30.1010.10">
    <property type="entry name" value="Phosphatidylinositol 3-kinase Catalytic Subunit, Chain A, domain 4"/>
    <property type="match status" value="1"/>
</dbReference>
<dbReference type="Gene3D" id="1.25.40.70">
    <property type="entry name" value="Phosphatidylinositol 3-kinase, accessory domain (PIK)"/>
    <property type="match status" value="1"/>
</dbReference>
<dbReference type="InterPro" id="IPR016024">
    <property type="entry name" value="ARM-type_fold"/>
</dbReference>
<dbReference type="InterPro" id="IPR035892">
    <property type="entry name" value="C2_domain_sf"/>
</dbReference>
<dbReference type="InterPro" id="IPR011009">
    <property type="entry name" value="Kinase-like_dom_sf"/>
</dbReference>
<dbReference type="InterPro" id="IPR000403">
    <property type="entry name" value="PI3/4_kinase_cat_dom"/>
</dbReference>
<dbReference type="InterPro" id="IPR036940">
    <property type="entry name" value="PI3/4_kinase_cat_sf"/>
</dbReference>
<dbReference type="InterPro" id="IPR018936">
    <property type="entry name" value="PI3/4_kinase_CS"/>
</dbReference>
<dbReference type="InterPro" id="IPR002420">
    <property type="entry name" value="PI3K-type_C2_dom"/>
</dbReference>
<dbReference type="InterPro" id="IPR001263">
    <property type="entry name" value="PI3K_accessory_dom"/>
</dbReference>
<dbReference type="InterPro" id="IPR042236">
    <property type="entry name" value="PI3K_accessory_sf"/>
</dbReference>
<dbReference type="InterPro" id="IPR008290">
    <property type="entry name" value="PI3K_Vps34"/>
</dbReference>
<dbReference type="InterPro" id="IPR015433">
    <property type="entry name" value="PI_Kinase"/>
</dbReference>
<dbReference type="PANTHER" id="PTHR10048:SF7">
    <property type="entry name" value="PHOSPHATIDYLINOSITOL 3-KINASE CATALYTIC SUBUNIT TYPE 3"/>
    <property type="match status" value="1"/>
</dbReference>
<dbReference type="PANTHER" id="PTHR10048">
    <property type="entry name" value="PHOSPHATIDYLINOSITOL KINASE"/>
    <property type="match status" value="1"/>
</dbReference>
<dbReference type="Pfam" id="PF00454">
    <property type="entry name" value="PI3_PI4_kinase"/>
    <property type="match status" value="1"/>
</dbReference>
<dbReference type="Pfam" id="PF00792">
    <property type="entry name" value="PI3K_C2"/>
    <property type="match status" value="1"/>
</dbReference>
<dbReference type="Pfam" id="PF00613">
    <property type="entry name" value="PI3Ka"/>
    <property type="match status" value="1"/>
</dbReference>
<dbReference type="PIRSF" id="PIRSF000587">
    <property type="entry name" value="PI3K_Vps34"/>
    <property type="match status" value="1"/>
</dbReference>
<dbReference type="SMART" id="SM00142">
    <property type="entry name" value="PI3K_C2"/>
    <property type="match status" value="1"/>
</dbReference>
<dbReference type="SMART" id="SM00145">
    <property type="entry name" value="PI3Ka"/>
    <property type="match status" value="1"/>
</dbReference>
<dbReference type="SMART" id="SM00146">
    <property type="entry name" value="PI3Kc"/>
    <property type="match status" value="1"/>
</dbReference>
<dbReference type="SUPFAM" id="SSF48371">
    <property type="entry name" value="ARM repeat"/>
    <property type="match status" value="1"/>
</dbReference>
<dbReference type="SUPFAM" id="SSF49562">
    <property type="entry name" value="C2 domain (Calcium/lipid-binding domain, CaLB)"/>
    <property type="match status" value="1"/>
</dbReference>
<dbReference type="SUPFAM" id="SSF56112">
    <property type="entry name" value="Protein kinase-like (PK-like)"/>
    <property type="match status" value="1"/>
</dbReference>
<dbReference type="PROSITE" id="PS51547">
    <property type="entry name" value="C2_PI3K"/>
    <property type="match status" value="1"/>
</dbReference>
<dbReference type="PROSITE" id="PS00915">
    <property type="entry name" value="PI3_4_KINASE_1"/>
    <property type="match status" value="1"/>
</dbReference>
<dbReference type="PROSITE" id="PS00916">
    <property type="entry name" value="PI3_4_KINASE_2"/>
    <property type="match status" value="1"/>
</dbReference>
<dbReference type="PROSITE" id="PS50290">
    <property type="entry name" value="PI3_4_KINASE_3"/>
    <property type="match status" value="1"/>
</dbReference>
<dbReference type="PROSITE" id="PS51545">
    <property type="entry name" value="PIK_HELICAL"/>
    <property type="match status" value="1"/>
</dbReference>
<protein>
    <recommendedName>
        <fullName evidence="21">Phosphatidylinositol 3-kinase VPS34</fullName>
        <shortName evidence="21">PI3-kinase VPS34</shortName>
        <shortName evidence="21">PI3K VPS34</shortName>
        <shortName evidence="21">PtdIns-3-kinase VPS34</shortName>
        <ecNumber evidence="18 19">2.7.1.137</ecNumber>
    </recommendedName>
    <alternativeName>
        <fullName>Carboxypeptidase Y-deficient protein 15</fullName>
    </alternativeName>
    <alternativeName>
        <fullName evidence="21">Vacuolar protein sorting-associated protein 34</fullName>
    </alternativeName>
    <alternativeName>
        <fullName evidence="22">Vacuolar protein-targeting protein 29</fullName>
    </alternativeName>
</protein>
<accession>P22543</accession>
<accession>D6VYN8</accession>
<name>VPS34_YEAST</name>
<organism>
    <name type="scientific">Saccharomyces cerevisiae (strain ATCC 204508 / S288c)</name>
    <name type="common">Baker's yeast</name>
    <dbReference type="NCBI Taxonomy" id="559292"/>
    <lineage>
        <taxon>Eukaryota</taxon>
        <taxon>Fungi</taxon>
        <taxon>Dikarya</taxon>
        <taxon>Ascomycota</taxon>
        <taxon>Saccharomycotina</taxon>
        <taxon>Saccharomycetes</taxon>
        <taxon>Saccharomycetales</taxon>
        <taxon>Saccharomycetaceae</taxon>
        <taxon>Saccharomyces</taxon>
    </lineage>
</organism>
<proteinExistence type="evidence at protein level"/>
<feature type="chain" id="PRO_0000088818" description="Phosphatidylinositol 3-kinase VPS34">
    <location>
        <begin position="1"/>
        <end position="875"/>
    </location>
</feature>
<feature type="domain" description="C2 PI3K-type" evidence="3">
    <location>
        <begin position="14"/>
        <end position="188"/>
    </location>
</feature>
<feature type="domain" description="PIK helical" evidence="2">
    <location>
        <begin position="293"/>
        <end position="526"/>
    </location>
</feature>
<feature type="domain" description="PI3K/PI4K catalytic" evidence="1">
    <location>
        <begin position="593"/>
        <end position="859"/>
    </location>
</feature>
<feature type="region of interest" description="G-loop" evidence="1">
    <location>
        <begin position="599"/>
        <end position="605"/>
    </location>
</feature>
<feature type="region of interest" description="Catalytic loop" evidence="1">
    <location>
        <begin position="728"/>
        <end position="736"/>
    </location>
</feature>
<feature type="region of interest" description="Activation loop" evidence="1">
    <location>
        <begin position="747"/>
        <end position="768"/>
    </location>
</feature>
<feature type="mutagenesis site" description="Loss of kinase activity and no vacuolar carboxypeptidase Y (PCR1) sorting to the vacuole." evidence="19">
    <original>D</original>
    <variation>A</variation>
    <location>
        <position position="731"/>
    </location>
</feature>
<feature type="mutagenesis site" description="Loss of kinase activity and no vacuolar carboxypeptidase Y (PCR1) sorting to the vacuole." evidence="19">
    <original>N</original>
    <variation>K</variation>
    <location>
        <position position="736"/>
    </location>
</feature>
<feature type="mutagenesis site" description="Loss of kinase activity and no vacuolar carboxypeptidase Y (PCR1) sorting to the vacuole." evidence="19">
    <original>D</original>
    <variation>E</variation>
    <location>
        <position position="749"/>
    </location>
</feature>
<sequence>MSLNNITFCVSQDLDVPLKVKIKSLEGHKPLLKPSQKILNPELMLIGSNVFPSSDLIVSLQVFDKERNRNLTLPIYTPYIPFRNSRTWDYWLTLPIRIKQLTFSSHLRIILWEYNGSKQIPFFNLETSIFNLKDCTLKRGFESLKFRYDVIDHCEVVTDNKDQENLNKYFQGEFTRLPWLDEITISKLRKQRENRTWPQGTFVLNLEFPMLELPVVFIEREIMNTQMNIPTLKNNPGLSTDLREPNRNDPQIKISLGDKYHSTLKFYDPDQPNNDPIEEKYRRLERASKNANLDKQVKPDIKKRDYLNKIINYPPGTKLTAHEKGSIWKYRYYLMNNKKALTKLLQSTNLREESERVEVLELMDSWAEIDIDDALELLGSTFKNLSVRSYAVNRLKKASDKELELYLLQLVEAVCFENLSTFSDKSNSEFTIVDAVSSQKLSGDSMLLSTSHANQKLLKSISSESETSGTESLPIVISPLAEFLIRRALVNPRLGSFFYWYLKSESEDKPYLDQILSSFWSRLDKKSRNILNDQVRLINVLRECCETIKRLKDTTAKKMELLVHLLETKVRPLVKVRPIALPLDPDVLICDVCPETSKVFKSSLSPLKITFKTTLNQPYHLMFKVGDDLRQDQLVVQIISLMNELLKNENVDLKLTPYKILATGPQEGAIEFIPNDTLASILSKYHGILGYLKLHYPDENATLGVQGWVLDNFVKSCAGYCVITYILGVGDRHLDNLLVTPDGHFFHADFGYILGQDPKPFPPLMKLPPQIIEAFGGAESSNYDKFRSYCFVAYSILRRNAGLILNLFELMKTSNIPDIRIDPNGAILRVRERFNLNMSEEDATVHFQNLINDSVNALLPIVIDHLHNLAQYWRT</sequence>
<gene>
    <name type="primary">VPS34</name>
    <name type="synonym">END12</name>
    <name type="synonym">PEP15</name>
    <name type="synonym">VPL7</name>
    <name evidence="22" type="synonym">VPT29</name>
    <name type="ordered locus">YLR240W</name>
    <name type="ORF">L9672.10</name>
</gene>
<evidence type="ECO:0000255" key="1">
    <source>
        <dbReference type="PROSITE-ProRule" id="PRU00269"/>
    </source>
</evidence>
<evidence type="ECO:0000255" key="2">
    <source>
        <dbReference type="PROSITE-ProRule" id="PRU00878"/>
    </source>
</evidence>
<evidence type="ECO:0000255" key="3">
    <source>
        <dbReference type="PROSITE-ProRule" id="PRU00880"/>
    </source>
</evidence>
<evidence type="ECO:0000269" key="4">
    <source>
    </source>
</evidence>
<evidence type="ECO:0000269" key="5">
    <source>
    </source>
</evidence>
<evidence type="ECO:0000269" key="6">
    <source>
    </source>
</evidence>
<evidence type="ECO:0000269" key="7">
    <source>
    </source>
</evidence>
<evidence type="ECO:0000269" key="8">
    <source>
    </source>
</evidence>
<evidence type="ECO:0000269" key="9">
    <source>
    </source>
</evidence>
<evidence type="ECO:0000269" key="10">
    <source>
    </source>
</evidence>
<evidence type="ECO:0000269" key="11">
    <source>
    </source>
</evidence>
<evidence type="ECO:0000269" key="12">
    <source>
    </source>
</evidence>
<evidence type="ECO:0000269" key="13">
    <source>
    </source>
</evidence>
<evidence type="ECO:0000269" key="14">
    <source>
    </source>
</evidence>
<evidence type="ECO:0000269" key="15">
    <source>
    </source>
</evidence>
<evidence type="ECO:0000269" key="16">
    <source>
    </source>
</evidence>
<evidence type="ECO:0000269" key="17">
    <source>
    </source>
</evidence>
<evidence type="ECO:0000269" key="18">
    <source>
    </source>
</evidence>
<evidence type="ECO:0000269" key="19">
    <source>
    </source>
</evidence>
<evidence type="ECO:0000269" key="20">
    <source>
    </source>
</evidence>
<evidence type="ECO:0000303" key="21">
    <source>
    </source>
</evidence>
<evidence type="ECO:0000303" key="22">
    <source>
    </source>
</evidence>
<evidence type="ECO:0000305" key="23">
    <source>
    </source>
</evidence>
<evidence type="ECO:0000305" key="24">
    <source>
    </source>
</evidence>
<evidence type="ECO:0007744" key="25">
    <source>
        <dbReference type="PDB" id="5DFZ"/>
    </source>
</evidence>
<evidence type="ECO:0007744" key="26">
    <source>
        <dbReference type="PDB" id="5KC2"/>
    </source>
</evidence>
<reference key="1">
    <citation type="journal article" date="1990" name="Mol. Cell. Biol.">
        <title>Characterization of VPS34, a gene required for vacuolar protein sorting and vacuole segregation in Saccharomyces cerevisiae.</title>
        <authorList>
            <person name="Herman P.K."/>
            <person name="Emr S.D."/>
        </authorList>
    </citation>
    <scope>NUCLEOTIDE SEQUENCE [GENOMIC DNA]</scope>
    <scope>FUNCTION</scope>
</reference>
<reference key="2">
    <citation type="journal article" date="1997" name="Nature">
        <title>The nucleotide sequence of Saccharomyces cerevisiae chromosome XII.</title>
        <authorList>
            <person name="Johnston M."/>
            <person name="Hillier L.W."/>
            <person name="Riles L."/>
            <person name="Albermann K."/>
            <person name="Andre B."/>
            <person name="Ansorge W."/>
            <person name="Benes V."/>
            <person name="Brueckner M."/>
            <person name="Delius H."/>
            <person name="Dubois E."/>
            <person name="Duesterhoeft A."/>
            <person name="Entian K.-D."/>
            <person name="Floeth M."/>
            <person name="Goffeau A."/>
            <person name="Hebling U."/>
            <person name="Heumann K."/>
            <person name="Heuss-Neitzel D."/>
            <person name="Hilbert H."/>
            <person name="Hilger F."/>
            <person name="Kleine K."/>
            <person name="Koetter P."/>
            <person name="Louis E.J."/>
            <person name="Messenguy F."/>
            <person name="Mewes H.-W."/>
            <person name="Miosga T."/>
            <person name="Moestl D."/>
            <person name="Mueller-Auer S."/>
            <person name="Nentwich U."/>
            <person name="Obermaier B."/>
            <person name="Piravandi E."/>
            <person name="Pohl T.M."/>
            <person name="Portetelle D."/>
            <person name="Purnelle B."/>
            <person name="Rechmann S."/>
            <person name="Rieger M."/>
            <person name="Rinke M."/>
            <person name="Rose M."/>
            <person name="Scharfe M."/>
            <person name="Scherens B."/>
            <person name="Scholler P."/>
            <person name="Schwager C."/>
            <person name="Schwarz S."/>
            <person name="Underwood A.P."/>
            <person name="Urrestarazu L.A."/>
            <person name="Vandenbol M."/>
            <person name="Verhasselt P."/>
            <person name="Vierendeels F."/>
            <person name="Voet M."/>
            <person name="Volckaert G."/>
            <person name="Voss H."/>
            <person name="Wambutt R."/>
            <person name="Wedler E."/>
            <person name="Wedler H."/>
            <person name="Zimmermann F.K."/>
            <person name="Zollner A."/>
            <person name="Hani J."/>
            <person name="Hoheisel J.D."/>
        </authorList>
    </citation>
    <scope>NUCLEOTIDE SEQUENCE [LARGE SCALE GENOMIC DNA]</scope>
    <source>
        <strain>ATCC 204508 / S288c</strain>
    </source>
</reference>
<reference key="3">
    <citation type="journal article" date="2014" name="G3 (Bethesda)">
        <title>The reference genome sequence of Saccharomyces cerevisiae: Then and now.</title>
        <authorList>
            <person name="Engel S.R."/>
            <person name="Dietrich F.S."/>
            <person name="Fisk D.G."/>
            <person name="Binkley G."/>
            <person name="Balakrishnan R."/>
            <person name="Costanzo M.C."/>
            <person name="Dwight S.S."/>
            <person name="Hitz B.C."/>
            <person name="Karra K."/>
            <person name="Nash R.S."/>
            <person name="Weng S."/>
            <person name="Wong E.D."/>
            <person name="Lloyd P."/>
            <person name="Skrzypek M.S."/>
            <person name="Miyasato S.R."/>
            <person name="Simison M."/>
            <person name="Cherry J.M."/>
        </authorList>
    </citation>
    <scope>GENOME REANNOTATION</scope>
    <source>
        <strain>ATCC 204508 / S288c</strain>
    </source>
</reference>
<reference key="4">
    <citation type="journal article" date="1988" name="Mol. Cell. Biol.">
        <title>Protein sorting in Saccharomyces cerevisiae: isolation of mutants defective in the delivery and processing of multiple vacuolar hydrolases.</title>
        <authorList>
            <person name="Robinson J.S."/>
            <person name="Klionsky D.J."/>
            <person name="Banta L.M."/>
            <person name="Emr S.D."/>
        </authorList>
    </citation>
    <scope>FUNCTION</scope>
</reference>
<reference key="5">
    <citation type="journal article" date="1989" name="J. Biol. Chem.">
        <title>Phosphatidylinositol 3-kinase and its novel product, phosphatidylinositol 3-phosphate, are present in Saccharomyces cerevisiae.</title>
        <authorList>
            <person name="Auger K.R."/>
            <person name="Carpenter C.L."/>
            <person name="Cantley L.C."/>
            <person name="Varticovski L."/>
        </authorList>
    </citation>
    <scope>FUNCTION</scope>
</reference>
<reference key="6">
    <citation type="journal article" date="1993" name="EMBO J.">
        <title>A membrane-associated complex containing the Vps15 protein kinase and the Vps34 PI 3-kinase is essential for protein sorting to the yeast lysosome-like vacuole.</title>
        <authorList>
            <person name="Stack J.H."/>
            <person name="Herman P.K."/>
            <person name="Schu P.V."/>
            <person name="Emr S.D."/>
        </authorList>
    </citation>
    <scope>FUNCTION</scope>
    <scope>INTERACTION WITH VPS15</scope>
</reference>
<reference key="7">
    <citation type="journal article" date="1993" name="Science">
        <title>Phosphatidylinositol 3-kinase encoded by yeast VPS34 gene essential for protein sorting.</title>
        <authorList>
            <person name="Schu P.V."/>
            <person name="Takegawa K."/>
            <person name="Fry M.J."/>
            <person name="Stack J.H."/>
            <person name="Waterfield M.D."/>
            <person name="Emr S.D."/>
        </authorList>
    </citation>
    <scope>FUNCTION</scope>
    <scope>CATALYTIC ACTIVITY</scope>
    <scope>MUTAGENESIS OF ASP-731; ASN-736 AND ASP-749</scope>
</reference>
<reference key="8">
    <citation type="journal article" date="1994" name="J. Biol. Chem.">
        <title>Vps34p required for yeast vacuolar protein sorting is a multiple specificity kinase that exhibits both protein kinase and phosphatidylinositol-specific PI 3-kinase activities.</title>
        <authorList>
            <person name="Stack J.H."/>
            <person name="Emr S.D."/>
        </authorList>
    </citation>
    <scope>FUNCTION</scope>
    <scope>CATALYTIC ACTIVITY</scope>
    <scope>AUTOPHOSPHORYLATION</scope>
</reference>
<reference key="9">
    <citation type="journal article" date="1994" name="J. Cell Biol.">
        <title>Endocytosis is required for the growth of vacuolar H(+)-ATPase-defective yeast: identification of six new END genes.</title>
        <authorList>
            <person name="Munn A.L."/>
            <person name="Riezman H."/>
        </authorList>
    </citation>
    <scope>FUNCTION</scope>
</reference>
<reference key="10">
    <citation type="journal article" date="2001" name="J. Cell Biol.">
        <title>Two distinct Vps34 phosphatidylinositol 3-kinase complexes function in autophagy and carboxypeptidase Y sorting in Saccharomyces cerevisiae.</title>
        <authorList>
            <person name="Kihara A."/>
            <person name="Noda T."/>
            <person name="Ishihara N."/>
            <person name="Ohsumi Y."/>
        </authorList>
    </citation>
    <scope>FUNCTION</scope>
    <scope>SUBCELLULAR LOCATION</scope>
    <scope>INTERACTION WITH VPS15; VPS30; VPS38 AND ATG14</scope>
</reference>
<reference key="11">
    <citation type="journal article" date="2001" name="Mol. Genet. Genomics">
        <title>Identification of genes required for growth under ethanol stress using transposon mutagenesis in Saccharomyces cerevisiae.</title>
        <authorList>
            <person name="Takahashi T."/>
            <person name="Shimoi H."/>
            <person name="Ito K."/>
        </authorList>
    </citation>
    <scope>FUNCTION</scope>
</reference>
<reference key="12">
    <citation type="journal article" date="2002" name="J. Cell Sci.">
        <title>Retromer function in endosome-to-Golgi retrograde transport is regulated by the yeast Vps34 PtdIns 3-kinase.</title>
        <authorList>
            <person name="Burda P."/>
            <person name="Padilla S.M."/>
            <person name="Sarkar S."/>
            <person name="Emr S.D."/>
        </authorList>
    </citation>
    <scope>FUNCTION</scope>
</reference>
<reference key="13">
    <citation type="journal article" date="2003" name="Nature">
        <title>Global analysis of protein localization in budding yeast.</title>
        <authorList>
            <person name="Huh W.-K."/>
            <person name="Falvo J.V."/>
            <person name="Gerke L.C."/>
            <person name="Carroll A.S."/>
            <person name="Howson R.W."/>
            <person name="Weissman J.S."/>
            <person name="O'Shea E.K."/>
        </authorList>
    </citation>
    <scope>SUBCELLULAR LOCATION [LARGE SCALE ANALYSIS]</scope>
</reference>
<reference key="14">
    <citation type="journal article" date="2003" name="Nature">
        <title>Global analysis of protein expression in yeast.</title>
        <authorList>
            <person name="Ghaemmaghami S."/>
            <person name="Huh W.-K."/>
            <person name="Bower K."/>
            <person name="Howson R.W."/>
            <person name="Belle A."/>
            <person name="Dephoure N."/>
            <person name="O'Shea E.K."/>
            <person name="Weissman J.S."/>
        </authorList>
    </citation>
    <scope>LEVEL OF PROTEIN EXPRESSION [LARGE SCALE ANALYSIS]</scope>
</reference>
<reference key="15">
    <citation type="journal article" date="2013" name="J. Cell Biol.">
        <title>Atg38 is required for autophagy-specific phosphatidylinositol 3-kinase complex integrity.</title>
        <authorList>
            <person name="Araki Y."/>
            <person name="Ku W.C."/>
            <person name="Akioka M."/>
            <person name="May A.I."/>
            <person name="Hayashi Y."/>
            <person name="Arisaka F."/>
            <person name="Ishihama Y."/>
            <person name="Ohsumi Y."/>
        </authorList>
    </citation>
    <scope>IDENTIFICATION BY MASS SPECTROMETRY</scope>
    <scope>IDENTIFICATION IN THE AUTOPHAGY-SPECIFIC VPS34 PI3-KINASE COMPLEX I</scope>
    <scope>INTERACTION WITH ATG38</scope>
</reference>
<reference key="16">
    <citation type="journal article" date="2015" name="Mol. Biol. Cell">
        <title>A LAPF/phafin1-like protein regulates TORC1 and lysosomal membrane permeabilization in response to endoplasmic reticulum membrane stress.</title>
        <authorList>
            <person name="Kim A."/>
            <person name="Cunningham K.W."/>
        </authorList>
    </citation>
    <scope>DISRUPTION PHENOTYPE</scope>
</reference>
<reference key="17">
    <citation type="journal article" date="2017" name="Mol. Cell. Biol.">
        <title>An In vitro TORC1 kinase assay that recapitulates the Gtr-independent glutamine-responsive TORC1 activation mechanism on yeast vacuoles.</title>
        <authorList>
            <person name="Tanigawa M."/>
            <person name="Maeda T."/>
        </authorList>
    </citation>
    <scope>DISRUPTION PHENOTYPE</scope>
</reference>
<reference key="18">
    <citation type="journal article" date="2018" name="PLoS Genet.">
        <title>Gtr/Ego-independent TORC1 activation is achieved through a glutamine-sensitive interaction with Pib2 on the vacuolar membrane.</title>
        <authorList>
            <person name="Ukai H."/>
            <person name="Araki Y."/>
            <person name="Kira S."/>
            <person name="Oikawa Y."/>
            <person name="May A.I."/>
            <person name="Noda T."/>
        </authorList>
    </citation>
    <scope>DISRUPTION PHENOTYPE</scope>
</reference>
<reference evidence="25" key="19">
    <citation type="journal article" date="2015" name="Science">
        <title>Structure and flexibility of the endosomal Vps34 complex reveals the basis of its function on membranes.</title>
        <authorList>
            <person name="Rostislavleva K."/>
            <person name="Soler N."/>
            <person name="Ohashi Y."/>
            <person name="Zhang L."/>
            <person name="Pardon E."/>
            <person name="Burke J.E."/>
            <person name="Masson G.R."/>
            <person name="Johnson C."/>
            <person name="Steyaert J."/>
            <person name="Ktistakis N.T."/>
            <person name="Williams R.L."/>
        </authorList>
    </citation>
    <scope>X-RAY CRYSTALLOGRAPHY (4.40 ANGSTROMS) WITHIN THE VPS34 PI3-KINASE COMPLEX II</scope>
    <scope>SUBUNIT</scope>
</reference>
<reference evidence="26" key="20">
    <citation type="journal article" date="2016" name="Autophagy">
        <title>Characterization of Atg38 and NRBF2, a fifth subunit of the autophagic Vps34/PIK3C3 complex.</title>
        <authorList>
            <person name="Ohashi Y."/>
            <person name="Soler N."/>
            <person name="Garcia Ortegon M."/>
            <person name="Zhang L."/>
            <person name="Kirsten M.L."/>
            <person name="Perisic O."/>
            <person name="Masson G.R."/>
            <person name="Burke J.E."/>
            <person name="Jakobi A.J."/>
            <person name="Apostolakis A.A."/>
            <person name="Johnson C.M."/>
            <person name="Ohashi M."/>
            <person name="Ktistakis N.T."/>
            <person name="Sachse C."/>
            <person name="Williams R.L."/>
        </authorList>
    </citation>
    <scope>STRUCTURE BY ELECTRON MICROSCOPY (28.00 ANGSTROMS) IN COMPLEX WITH VPS15</scope>
</reference>
<comment type="function">
    <text evidence="4 5 6 8 10 16 17 18 19 20">Phosphatidylinositol 3-kinase required for cytoplasm to vacuole transport (Cvt) and autophagy as a part of the autophagy-specific VPS34 PI3-kinase complex I. This complex is essential to recruit the ATG8-phosphatidylinositol conjugate and the ATG12-ATG5 conjugate to the pre-autophagosomal structure. Also involved in endosome-to-Golgi retrograde transport as part of the VPS34 PI3-kinase complex II. This second complex is required for the endosome-to-Golgi retrieval of PEP1 and KEX2, and the recruitment of VPS5 and VPS7, two components of the retromer complex, to endosomal membranes (probably through the synthesis of a specific pool of phosphatidylinositol 3-phosphate recruiting the retromer to the endosomes). Its activation by VPS15 may lead to the phosphorylation of phosphatidylinositol in the sorting compartment membrane. Finally, it might also be involved in ethanol tolerance and cell wall integrity.</text>
</comment>
<comment type="catalytic activity">
    <reaction evidence="18 19">
        <text>a 1,2-diacyl-sn-glycero-3-phospho-(1D-myo-inositol) + ATP = a 1,2-diacyl-sn-glycero-3-phospho-(1D-myo-inositol-3-phosphate) + ADP + H(+)</text>
        <dbReference type="Rhea" id="RHEA:12709"/>
        <dbReference type="ChEBI" id="CHEBI:15378"/>
        <dbReference type="ChEBI" id="CHEBI:30616"/>
        <dbReference type="ChEBI" id="CHEBI:57880"/>
        <dbReference type="ChEBI" id="CHEBI:58088"/>
        <dbReference type="ChEBI" id="CHEBI:456216"/>
        <dbReference type="EC" id="2.7.1.137"/>
    </reaction>
    <physiologicalReaction direction="left-to-right" evidence="23 24">
        <dbReference type="Rhea" id="RHEA:12710"/>
    </physiologicalReaction>
</comment>
<comment type="activity regulation">
    <text>Phosphatidylinositol 3-kinase activity is directly dependent on VPS15 protein kinase activity.</text>
</comment>
<comment type="subunit">
    <text evidence="4 9 11 13 20">Component of the autophagy-specific VPS34 PI3-kinase complex I composed of VPS15, VPS30, VPS34, ATG14 and ATG38, and of the VPS34 PI3-kinase complex II composed of VPS15, VPS30, VPS34 and VPS38 (PubMed:11157979, PubMed:24165940, PubMed:26450213, PubMed:8387919). Interacts directly with ATG38 (PubMed:24165940). Interacts directly with VPS34 (PubMed:27630019).</text>
</comment>
<comment type="interaction">
    <interactant intactId="EBI-20405">
        <id>P22543</id>
    </interactant>
    <interactant intactId="EBI-35873">
        <id>Q05789</id>
        <label>ATG38</label>
    </interactant>
    <organismsDiffer>false</organismsDiffer>
    <experiments>5</experiments>
</comment>
<comment type="interaction">
    <interactant intactId="EBI-20405">
        <id>P22543</id>
    </interactant>
    <interactant intactId="EBI-7376">
        <id>P08539</id>
        <label>GPA1</label>
    </interactant>
    <organismsDiffer>false</organismsDiffer>
    <experiments>3</experiments>
</comment>
<comment type="interaction">
    <interactant intactId="EBI-20405">
        <id>P22543</id>
    </interactant>
    <interactant intactId="EBI-20347">
        <id>P22219</id>
        <label>VPS15</label>
    </interactant>
    <organismsDiffer>false</organismsDiffer>
    <experiments>4</experiments>
</comment>
<comment type="subcellular location">
    <subcellularLocation>
        <location evidence="4">Golgi apparatus</location>
        <location evidence="4">trans-Golgi network membrane</location>
        <topology evidence="4">Peripheral membrane protein</topology>
    </subcellularLocation>
    <subcellularLocation>
        <location evidence="4">Endosome membrane</location>
        <topology evidence="4">Peripheral membrane protein</topology>
    </subcellularLocation>
</comment>
<comment type="PTM">
    <text>Autophosphorylated. Might also be phosphorylated by VPS15.</text>
</comment>
<comment type="disruption phenotype">
    <text evidence="12 14 15">Abnormal localization of the peripheral membrane protein PIB2 to the vacuolar membrane (PubMed:26510498, PubMed:29698392). Decreases activation of TORC1 in response to glutamine (PubMed:28483912).</text>
</comment>
<comment type="miscellaneous">
    <text evidence="7">Present with 1080 molecules/cell in log phase SD medium.</text>
</comment>
<comment type="similarity">
    <text evidence="3">Belongs to the PI3/PI4-kinase family.</text>
</comment>
<keyword id="KW-0002">3D-structure</keyword>
<keyword id="KW-0067">ATP-binding</keyword>
<keyword id="KW-0072">Autophagy</keyword>
<keyword id="KW-0967">Endosome</keyword>
<keyword id="KW-0333">Golgi apparatus</keyword>
<keyword id="KW-0418">Kinase</keyword>
<keyword id="KW-0472">Membrane</keyword>
<keyword id="KW-0547">Nucleotide-binding</keyword>
<keyword id="KW-0597">Phosphoprotein</keyword>
<keyword id="KW-0653">Protein transport</keyword>
<keyword id="KW-1185">Reference proteome</keyword>
<keyword id="KW-0808">Transferase</keyword>
<keyword id="KW-0813">Transport</keyword>